<sequence length="436" mass="46515">MGQVLPLVTRQGDRIAIVSGLRTPFARQATAFHGIPAVDLGKMVVGELLARSEIPAEVIEQLVFGQVVQMPEAPNIAREIVLGTGMNVHTDAYSVSRACATSFQAVANVVESLMAGTIRAGIAGGADSSSVLPIGVSKKLARVLVDVNKARTMSQRLKLFSRLRLRDLMPVPPAVAEYSTGLRMGDTAEQMAKTYGITREQQDALAHRSHQRAAQAWSDGKLKEEVMTAFIPPYKQLLAEDNNIRGNSSLADFAKLRPAFDRKHGTVTAANSTPLTDGAAAVILMTESRAKELGLVPLGYLRSYAFTAIDVWQDMLLGPAWSTPLALERAGLTMADLTLIDMHEAFAAQTLANIQLLGSERFAREALGRAHATGEVDDSKFNVLGGSIAYGHPFAATGARMITQTLHELRRRGGGFGLVTACAAGGLGAAMVLEAE</sequence>
<organism>
    <name type="scientific">Escherichia coli O157:H7</name>
    <dbReference type="NCBI Taxonomy" id="83334"/>
    <lineage>
        <taxon>Bacteria</taxon>
        <taxon>Pseudomonadati</taxon>
        <taxon>Pseudomonadota</taxon>
        <taxon>Gammaproteobacteria</taxon>
        <taxon>Enterobacterales</taxon>
        <taxon>Enterobacteriaceae</taxon>
        <taxon>Escherichia</taxon>
    </lineage>
</organism>
<reference key="1">
    <citation type="journal article" date="2001" name="Nature">
        <title>Genome sequence of enterohaemorrhagic Escherichia coli O157:H7.</title>
        <authorList>
            <person name="Perna N.T."/>
            <person name="Plunkett G. III"/>
            <person name="Burland V."/>
            <person name="Mau B."/>
            <person name="Glasner J.D."/>
            <person name="Rose D.J."/>
            <person name="Mayhew G.F."/>
            <person name="Evans P.S."/>
            <person name="Gregor J."/>
            <person name="Kirkpatrick H.A."/>
            <person name="Posfai G."/>
            <person name="Hackett J."/>
            <person name="Klink S."/>
            <person name="Boutin A."/>
            <person name="Shao Y."/>
            <person name="Miller L."/>
            <person name="Grotbeck E.J."/>
            <person name="Davis N.W."/>
            <person name="Lim A."/>
            <person name="Dimalanta E.T."/>
            <person name="Potamousis K."/>
            <person name="Apodaca J."/>
            <person name="Anantharaman T.S."/>
            <person name="Lin J."/>
            <person name="Yen G."/>
            <person name="Schwartz D.C."/>
            <person name="Welch R.A."/>
            <person name="Blattner F.R."/>
        </authorList>
    </citation>
    <scope>NUCLEOTIDE SEQUENCE [LARGE SCALE GENOMIC DNA]</scope>
    <source>
        <strain>O157:H7 / EDL933 / ATCC 700927 / EHEC</strain>
    </source>
</reference>
<reference key="2">
    <citation type="journal article" date="2001" name="DNA Res.">
        <title>Complete genome sequence of enterohemorrhagic Escherichia coli O157:H7 and genomic comparison with a laboratory strain K-12.</title>
        <authorList>
            <person name="Hayashi T."/>
            <person name="Makino K."/>
            <person name="Ohnishi M."/>
            <person name="Kurokawa K."/>
            <person name="Ishii K."/>
            <person name="Yokoyama K."/>
            <person name="Han C.-G."/>
            <person name="Ohtsubo E."/>
            <person name="Nakayama K."/>
            <person name="Murata T."/>
            <person name="Tanaka M."/>
            <person name="Tobe T."/>
            <person name="Iida T."/>
            <person name="Takami H."/>
            <person name="Honda T."/>
            <person name="Sasakawa C."/>
            <person name="Ogasawara N."/>
            <person name="Yasunaga T."/>
            <person name="Kuhara S."/>
            <person name="Shiba T."/>
            <person name="Hattori M."/>
            <person name="Shinagawa H."/>
        </authorList>
    </citation>
    <scope>NUCLEOTIDE SEQUENCE [LARGE SCALE GENOMIC DNA]</scope>
    <source>
        <strain>O157:H7 / Sakai / RIMD 0509952 / EHEC</strain>
    </source>
</reference>
<name>FADI_ECO57</name>
<dbReference type="EC" id="2.3.1.16" evidence="1"/>
<dbReference type="EMBL" id="AE005174">
    <property type="protein sequence ID" value="AAG57470.1"/>
    <property type="molecule type" value="Genomic_DNA"/>
</dbReference>
<dbReference type="EMBL" id="BA000007">
    <property type="protein sequence ID" value="BAB36648.1"/>
    <property type="molecule type" value="Genomic_DNA"/>
</dbReference>
<dbReference type="PIR" id="A98032">
    <property type="entry name" value="A98032"/>
</dbReference>
<dbReference type="PIR" id="B85876">
    <property type="entry name" value="B85876"/>
</dbReference>
<dbReference type="RefSeq" id="NP_311252.1">
    <property type="nucleotide sequence ID" value="NC_002695.1"/>
</dbReference>
<dbReference type="RefSeq" id="WP_000531969.1">
    <property type="nucleotide sequence ID" value="NZ_VOAI01000001.1"/>
</dbReference>
<dbReference type="SMR" id="Q8XCN9"/>
<dbReference type="STRING" id="155864.Z3605"/>
<dbReference type="GeneID" id="915678"/>
<dbReference type="KEGG" id="ece:Z3605"/>
<dbReference type="KEGG" id="ecs:ECs_3225"/>
<dbReference type="PATRIC" id="fig|386585.9.peg.3367"/>
<dbReference type="eggNOG" id="COG0183">
    <property type="taxonomic scope" value="Bacteria"/>
</dbReference>
<dbReference type="HOGENOM" id="CLU_031026_2_0_6"/>
<dbReference type="OMA" id="MTAFPEP"/>
<dbReference type="UniPathway" id="UPA00659"/>
<dbReference type="Proteomes" id="UP000000558">
    <property type="component" value="Chromosome"/>
</dbReference>
<dbReference type="Proteomes" id="UP000002519">
    <property type="component" value="Chromosome"/>
</dbReference>
<dbReference type="GO" id="GO:0005829">
    <property type="term" value="C:cytosol"/>
    <property type="evidence" value="ECO:0007669"/>
    <property type="project" value="TreeGrafter"/>
</dbReference>
<dbReference type="GO" id="GO:0003988">
    <property type="term" value="F:acetyl-CoA C-acyltransferase activity"/>
    <property type="evidence" value="ECO:0007669"/>
    <property type="project" value="UniProtKB-UniRule"/>
</dbReference>
<dbReference type="GO" id="GO:0006635">
    <property type="term" value="P:fatty acid beta-oxidation"/>
    <property type="evidence" value="ECO:0007669"/>
    <property type="project" value="UniProtKB-UniRule"/>
</dbReference>
<dbReference type="CDD" id="cd00751">
    <property type="entry name" value="thiolase"/>
    <property type="match status" value="1"/>
</dbReference>
<dbReference type="FunFam" id="3.40.47.10:FF:000011">
    <property type="entry name" value="3-ketoacyl-CoA thiolase"/>
    <property type="match status" value="1"/>
</dbReference>
<dbReference type="Gene3D" id="3.40.47.10">
    <property type="match status" value="1"/>
</dbReference>
<dbReference type="HAMAP" id="MF_01618">
    <property type="entry name" value="FadI"/>
    <property type="match status" value="1"/>
</dbReference>
<dbReference type="InterPro" id="IPR012806">
    <property type="entry name" value="Ac-CoA_C-AcTrfase_FadI"/>
</dbReference>
<dbReference type="InterPro" id="IPR002155">
    <property type="entry name" value="Thiolase"/>
</dbReference>
<dbReference type="InterPro" id="IPR016039">
    <property type="entry name" value="Thiolase-like"/>
</dbReference>
<dbReference type="InterPro" id="IPR020615">
    <property type="entry name" value="Thiolase_acyl_enz_int_AS"/>
</dbReference>
<dbReference type="InterPro" id="IPR020610">
    <property type="entry name" value="Thiolase_AS"/>
</dbReference>
<dbReference type="InterPro" id="IPR020617">
    <property type="entry name" value="Thiolase_C"/>
</dbReference>
<dbReference type="InterPro" id="IPR020613">
    <property type="entry name" value="Thiolase_CS"/>
</dbReference>
<dbReference type="InterPro" id="IPR020616">
    <property type="entry name" value="Thiolase_N"/>
</dbReference>
<dbReference type="NCBIfam" id="TIGR01930">
    <property type="entry name" value="AcCoA-C-Actrans"/>
    <property type="match status" value="1"/>
</dbReference>
<dbReference type="NCBIfam" id="TIGR02446">
    <property type="entry name" value="FadI"/>
    <property type="match status" value="1"/>
</dbReference>
<dbReference type="NCBIfam" id="NF006516">
    <property type="entry name" value="PRK08963.1"/>
    <property type="match status" value="1"/>
</dbReference>
<dbReference type="PANTHER" id="PTHR18919:SF107">
    <property type="entry name" value="ACETYL-COA ACETYLTRANSFERASE, CYTOSOLIC"/>
    <property type="match status" value="1"/>
</dbReference>
<dbReference type="PANTHER" id="PTHR18919">
    <property type="entry name" value="ACETYL-COA C-ACYLTRANSFERASE"/>
    <property type="match status" value="1"/>
</dbReference>
<dbReference type="Pfam" id="PF02803">
    <property type="entry name" value="Thiolase_C"/>
    <property type="match status" value="1"/>
</dbReference>
<dbReference type="Pfam" id="PF00108">
    <property type="entry name" value="Thiolase_N"/>
    <property type="match status" value="1"/>
</dbReference>
<dbReference type="PIRSF" id="PIRSF000429">
    <property type="entry name" value="Ac-CoA_Ac_transf"/>
    <property type="match status" value="1"/>
</dbReference>
<dbReference type="SUPFAM" id="SSF53901">
    <property type="entry name" value="Thiolase-like"/>
    <property type="match status" value="2"/>
</dbReference>
<dbReference type="PROSITE" id="PS00098">
    <property type="entry name" value="THIOLASE_1"/>
    <property type="match status" value="1"/>
</dbReference>
<dbReference type="PROSITE" id="PS00737">
    <property type="entry name" value="THIOLASE_2"/>
    <property type="match status" value="1"/>
</dbReference>
<dbReference type="PROSITE" id="PS00099">
    <property type="entry name" value="THIOLASE_3"/>
    <property type="match status" value="1"/>
</dbReference>
<evidence type="ECO:0000255" key="1">
    <source>
        <dbReference type="HAMAP-Rule" id="MF_01618"/>
    </source>
</evidence>
<protein>
    <recommendedName>
        <fullName evidence="1">3-ketoacyl-CoA thiolase</fullName>
        <ecNumber evidence="1">2.3.1.16</ecNumber>
    </recommendedName>
    <alternativeName>
        <fullName evidence="1">ACSs</fullName>
    </alternativeName>
    <alternativeName>
        <fullName evidence="1">Acetyl-CoA acyltransferase</fullName>
    </alternativeName>
    <alternativeName>
        <fullName evidence="1">Acyl-CoA ligase</fullName>
    </alternativeName>
    <alternativeName>
        <fullName evidence="1">Beta-ketothiolase</fullName>
    </alternativeName>
    <alternativeName>
        <fullName evidence="1">Fatty acid oxidation complex subunit beta</fullName>
    </alternativeName>
</protein>
<keyword id="KW-0012">Acyltransferase</keyword>
<keyword id="KW-0963">Cytoplasm</keyword>
<keyword id="KW-0276">Fatty acid metabolism</keyword>
<keyword id="KW-0442">Lipid degradation</keyword>
<keyword id="KW-0443">Lipid metabolism</keyword>
<keyword id="KW-1185">Reference proteome</keyword>
<keyword id="KW-0808">Transferase</keyword>
<proteinExistence type="inferred from homology"/>
<comment type="function">
    <text evidence="1">Catalyzes the final step of fatty acid oxidation in which acetyl-CoA is released and the CoA ester of a fatty acid two carbons shorter is formed.</text>
</comment>
<comment type="catalytic activity">
    <reaction evidence="1">
        <text>an acyl-CoA + acetyl-CoA = a 3-oxoacyl-CoA + CoA</text>
        <dbReference type="Rhea" id="RHEA:21564"/>
        <dbReference type="ChEBI" id="CHEBI:57287"/>
        <dbReference type="ChEBI" id="CHEBI:57288"/>
        <dbReference type="ChEBI" id="CHEBI:58342"/>
        <dbReference type="ChEBI" id="CHEBI:90726"/>
        <dbReference type="EC" id="2.3.1.16"/>
    </reaction>
</comment>
<comment type="pathway">
    <text evidence="1">Lipid metabolism; fatty acid beta-oxidation.</text>
</comment>
<comment type="subunit">
    <text evidence="1">Heterotetramer of two alpha chains (FadJ) and two beta chains (FadI).</text>
</comment>
<comment type="subcellular location">
    <subcellularLocation>
        <location evidence="1">Cytoplasm</location>
    </subcellularLocation>
</comment>
<comment type="similarity">
    <text evidence="1">Belongs to the thiolase-like superfamily. Thiolase family.</text>
</comment>
<accession>Q8XCN9</accession>
<accession>Q7ABX4</accession>
<feature type="chain" id="PRO_0000206438" description="3-ketoacyl-CoA thiolase">
    <location>
        <begin position="1"/>
        <end position="436"/>
    </location>
</feature>
<feature type="active site" description="Acyl-thioester intermediate" evidence="1">
    <location>
        <position position="99"/>
    </location>
</feature>
<feature type="active site" description="Proton acceptor" evidence="1">
    <location>
        <position position="392"/>
    </location>
</feature>
<feature type="active site" description="Proton acceptor" evidence="1">
    <location>
        <position position="422"/>
    </location>
</feature>
<gene>
    <name evidence="1" type="primary">fadI</name>
    <name type="ordered locus">Z3605</name>
    <name type="ordered locus">ECs3225</name>
</gene>